<gene>
    <name type="primary">cpnB-1</name>
    <name type="ORF">DDB_G0272875</name>
</gene>
<gene>
    <name type="primary">cpnB-2</name>
    <name type="ORF">DDB_G0274051</name>
</gene>
<sequence length="530" mass="58830">MTTPISLSKPRVELRFKCSHLKNLDICSKSDPLIMVFDKRGEHGESIFVGQTEKINNNLNPEFKKSVIIDYHFENIQNLSFIVVDIDKEIKRVGDLEGNDIIGQYTTTLGNIISKPNKKVISEIKHKGKETGVIEITAEEIRETGHNFLFKINGTKLDKKDLFTSDPYFKIYKTSSSGNVLVYQSVVIKNTLNPNYEPVMMKLEELNNGDMFRELVFEFWDHDSVGEHDFIGLFTTNADTVLKGITREFPLINAKKAAKKSGSYKNSGVITFTDCRLVGQPTFIDYLSGGCEINLMVAIDCTASNGSPSTSTSLHYHTPSHPSQYAKSIFSVGSVLAPYDSDGNIEVLGFGGIHRGSTSHCFQFGSKKEVRGVEGVLLTYGEVIPSMSLSYPTNFKDIISYAAKKSLDGVTSKSQKYTILLILTDGEISDMNETVHEIVKASKQSPLSIVIIGIGEATFDNMNRLDGDDGNSLTDSSGQTATRDIVQFVPFNNFSANPEALATETLREIPQQLLGFMNQNNYLPMSHRLK</sequence>
<comment type="cofactor">
    <cofactor evidence="1">
        <name>Ca(2+)</name>
        <dbReference type="ChEBI" id="CHEBI:29108"/>
    </cofactor>
</comment>
<comment type="developmental stage">
    <text evidence="3">Expressed at relatively high levels in vegetative cells. The expression goes down at the second hour of development and increase slightly at the 8th hour time point.</text>
</comment>
<comment type="similarity">
    <text evidence="4">Belongs to the copine family.</text>
</comment>
<comment type="caution">
    <text evidence="4">The gene for this protein is duplicated in strains AX3 and AX4. These strains contain a duplication of a segment of 750 kb of chromosome 2 compared to the corresponding sequence in strain AX2.</text>
</comment>
<reference key="1">
    <citation type="journal article" date="2005" name="BMC Cell Biol.">
        <title>Copine A, a calcium-dependent membrane-binding protein, transiently localizes to the plasma membrane and intracellular vacuoles in Dictyostelium.</title>
        <authorList>
            <person name="Damer C.K."/>
            <person name="Bayeva M."/>
            <person name="Hahn E.S."/>
            <person name="Rivera J."/>
            <person name="Socec C.I."/>
        </authorList>
    </citation>
    <scope>NUCLEOTIDE SEQUENCE [MRNA]</scope>
</reference>
<reference key="2">
    <citation type="journal article" date="2002" name="Nature">
        <title>Sequence and analysis of chromosome 2 of Dictyostelium discoideum.</title>
        <authorList>
            <person name="Gloeckner G."/>
            <person name="Eichinger L."/>
            <person name="Szafranski K."/>
            <person name="Pachebat J.A."/>
            <person name="Bankier A.T."/>
            <person name="Dear P.H."/>
            <person name="Lehmann R."/>
            <person name="Baumgart C."/>
            <person name="Parra G."/>
            <person name="Abril J.F."/>
            <person name="Guigo R."/>
            <person name="Kumpf K."/>
            <person name="Tunggal B."/>
            <person name="Cox E.C."/>
            <person name="Quail M.A."/>
            <person name="Platzer M."/>
            <person name="Rosenthal A."/>
            <person name="Noegel A.A."/>
        </authorList>
    </citation>
    <scope>NUCLEOTIDE SEQUENCE [LARGE SCALE GENOMIC DNA]</scope>
    <source>
        <strain>AX4</strain>
    </source>
</reference>
<reference key="3">
    <citation type="journal article" date="2005" name="Nature">
        <title>The genome of the social amoeba Dictyostelium discoideum.</title>
        <authorList>
            <person name="Eichinger L."/>
            <person name="Pachebat J.A."/>
            <person name="Gloeckner G."/>
            <person name="Rajandream M.A."/>
            <person name="Sucgang R."/>
            <person name="Berriman M."/>
            <person name="Song J."/>
            <person name="Olsen R."/>
            <person name="Szafranski K."/>
            <person name="Xu Q."/>
            <person name="Tunggal B."/>
            <person name="Kummerfeld S."/>
            <person name="Madera M."/>
            <person name="Konfortov B.A."/>
            <person name="Rivero F."/>
            <person name="Bankier A.T."/>
            <person name="Lehmann R."/>
            <person name="Hamlin N."/>
            <person name="Davies R."/>
            <person name="Gaudet P."/>
            <person name="Fey P."/>
            <person name="Pilcher K."/>
            <person name="Chen G."/>
            <person name="Saunders D."/>
            <person name="Sodergren E.J."/>
            <person name="Davis P."/>
            <person name="Kerhornou A."/>
            <person name="Nie X."/>
            <person name="Hall N."/>
            <person name="Anjard C."/>
            <person name="Hemphill L."/>
            <person name="Bason N."/>
            <person name="Farbrother P."/>
            <person name="Desany B."/>
            <person name="Just E."/>
            <person name="Morio T."/>
            <person name="Rost R."/>
            <person name="Churcher C.M."/>
            <person name="Cooper J."/>
            <person name="Haydock S."/>
            <person name="van Driessche N."/>
            <person name="Cronin A."/>
            <person name="Goodhead I."/>
            <person name="Muzny D.M."/>
            <person name="Mourier T."/>
            <person name="Pain A."/>
            <person name="Lu M."/>
            <person name="Harper D."/>
            <person name="Lindsay R."/>
            <person name="Hauser H."/>
            <person name="James K.D."/>
            <person name="Quiles M."/>
            <person name="Madan Babu M."/>
            <person name="Saito T."/>
            <person name="Buchrieser C."/>
            <person name="Wardroper A."/>
            <person name="Felder M."/>
            <person name="Thangavelu M."/>
            <person name="Johnson D."/>
            <person name="Knights A."/>
            <person name="Loulseged H."/>
            <person name="Mungall K.L."/>
            <person name="Oliver K."/>
            <person name="Price C."/>
            <person name="Quail M.A."/>
            <person name="Urushihara H."/>
            <person name="Hernandez J."/>
            <person name="Rabbinowitsch E."/>
            <person name="Steffen D."/>
            <person name="Sanders M."/>
            <person name="Ma J."/>
            <person name="Kohara Y."/>
            <person name="Sharp S."/>
            <person name="Simmonds M.N."/>
            <person name="Spiegler S."/>
            <person name="Tivey A."/>
            <person name="Sugano S."/>
            <person name="White B."/>
            <person name="Walker D."/>
            <person name="Woodward J.R."/>
            <person name="Winckler T."/>
            <person name="Tanaka Y."/>
            <person name="Shaulsky G."/>
            <person name="Schleicher M."/>
            <person name="Weinstock G.M."/>
            <person name="Rosenthal A."/>
            <person name="Cox E.C."/>
            <person name="Chisholm R.L."/>
            <person name="Gibbs R.A."/>
            <person name="Loomis W.F."/>
            <person name="Platzer M."/>
            <person name="Kay R.R."/>
            <person name="Williams J.G."/>
            <person name="Dear P.H."/>
            <person name="Noegel A.A."/>
            <person name="Barrell B.G."/>
            <person name="Kuspa A."/>
        </authorList>
    </citation>
    <scope>NUCLEOTIDE SEQUENCE [LARGE SCALE GENOMIC DNA]</scope>
    <source>
        <strain>AX4</strain>
    </source>
</reference>
<reference key="4">
    <citation type="journal article" date="2007" name="Eukaryot. Cell">
        <title>Copine A is required for cytokinesis, contractile vacuole function, and development in Dictyostelium.</title>
        <authorList>
            <person name="Damer C.K."/>
            <person name="Bayeva M."/>
            <person name="Kim P.S."/>
            <person name="Ho L.K."/>
            <person name="Eberhardt E.S."/>
            <person name="Socec C.I."/>
            <person name="Lee J.S."/>
            <person name="Bruce E.A."/>
            <person name="Goldman-Yassen A.E."/>
            <person name="Naliboff L.C."/>
        </authorList>
    </citation>
    <scope>DEVELOPMENTAL STAGE</scope>
</reference>
<protein>
    <recommendedName>
        <fullName>Copine-B</fullName>
    </recommendedName>
</protein>
<name>CPNB_DICDI</name>
<keyword id="KW-0106">Calcium</keyword>
<keyword id="KW-0479">Metal-binding</keyword>
<keyword id="KW-1185">Reference proteome</keyword>
<keyword id="KW-0677">Repeat</keyword>
<organism>
    <name type="scientific">Dictyostelium discoideum</name>
    <name type="common">Social amoeba</name>
    <dbReference type="NCBI Taxonomy" id="44689"/>
    <lineage>
        <taxon>Eukaryota</taxon>
        <taxon>Amoebozoa</taxon>
        <taxon>Evosea</taxon>
        <taxon>Eumycetozoa</taxon>
        <taxon>Dictyostelia</taxon>
        <taxon>Dictyosteliales</taxon>
        <taxon>Dictyosteliaceae</taxon>
        <taxon>Dictyostelium</taxon>
    </lineage>
</organism>
<feature type="chain" id="PRO_0000330655" description="Copine-B">
    <location>
        <begin position="1"/>
        <end position="530"/>
    </location>
</feature>
<feature type="domain" description="C2 1" evidence="1">
    <location>
        <begin position="1"/>
        <end position="125"/>
    </location>
</feature>
<feature type="domain" description="C2 2" evidence="1">
    <location>
        <begin position="130"/>
        <end position="253"/>
    </location>
</feature>
<feature type="domain" description="VWFA" evidence="2">
    <location>
        <begin position="294"/>
        <end position="513"/>
    </location>
</feature>
<feature type="binding site" evidence="1">
    <location>
        <position position="25"/>
    </location>
    <ligand>
        <name>Ca(2+)</name>
        <dbReference type="ChEBI" id="CHEBI:29108"/>
        <label>1</label>
    </ligand>
</feature>
<feature type="binding site" evidence="1">
    <location>
        <position position="25"/>
    </location>
    <ligand>
        <name>Ca(2+)</name>
        <dbReference type="ChEBI" id="CHEBI:29108"/>
        <label>2</label>
    </ligand>
</feature>
<feature type="binding site" evidence="1">
    <location>
        <position position="31"/>
    </location>
    <ligand>
        <name>Ca(2+)</name>
        <dbReference type="ChEBI" id="CHEBI:29108"/>
        <label>1</label>
    </ligand>
</feature>
<feature type="binding site" evidence="1">
    <location>
        <position position="85"/>
    </location>
    <ligand>
        <name>Ca(2+)</name>
        <dbReference type="ChEBI" id="CHEBI:29108"/>
        <label>1</label>
    </ligand>
</feature>
<feature type="binding site" evidence="1">
    <location>
        <position position="85"/>
    </location>
    <ligand>
        <name>Ca(2+)</name>
        <dbReference type="ChEBI" id="CHEBI:29108"/>
        <label>2</label>
    </ligand>
</feature>
<feature type="binding site" evidence="1">
    <location>
        <position position="87"/>
    </location>
    <ligand>
        <name>Ca(2+)</name>
        <dbReference type="ChEBI" id="CHEBI:29108"/>
        <label>1</label>
    </ligand>
</feature>
<feature type="binding site" evidence="1">
    <location>
        <position position="87"/>
    </location>
    <ligand>
        <name>Ca(2+)</name>
        <dbReference type="ChEBI" id="CHEBI:29108"/>
        <label>2</label>
    </ligand>
</feature>
<feature type="binding site" evidence="1">
    <location>
        <position position="100"/>
    </location>
    <ligand>
        <name>Ca(2+)</name>
        <dbReference type="ChEBI" id="CHEBI:29108"/>
        <label>2</label>
    </ligand>
</feature>
<feature type="sequence conflict" description="In Ref. 3; EAL70459/EAL71075." evidence="4" ref="3">
    <original>DICS</original>
    <variation>GKYQY</variation>
    <location>
        <begin position="25"/>
        <end position="28"/>
    </location>
</feature>
<dbReference type="EMBL" id="AY593970">
    <property type="protein sequence ID" value="AAT02416.1"/>
    <property type="molecule type" value="mRNA"/>
</dbReference>
<dbReference type="EMBL" id="AAFI02000011">
    <property type="protein sequence ID" value="EAL70459.1"/>
    <property type="molecule type" value="Genomic_DNA"/>
</dbReference>
<dbReference type="EMBL" id="AAFI02000009">
    <property type="protein sequence ID" value="EAL71075.1"/>
    <property type="molecule type" value="Genomic_DNA"/>
</dbReference>
<dbReference type="RefSeq" id="XP_644384.1">
    <property type="nucleotide sequence ID" value="XM_639292.1"/>
</dbReference>
<dbReference type="RefSeq" id="XP_645029.1">
    <property type="nucleotide sequence ID" value="XM_639937.1"/>
</dbReference>
<dbReference type="SMR" id="Q86K21"/>
<dbReference type="FunCoup" id="Q86K21">
    <property type="interactions" value="17"/>
</dbReference>
<dbReference type="STRING" id="44689.Q86K21"/>
<dbReference type="PaxDb" id="44689-DDB0216245"/>
<dbReference type="EnsemblProtists" id="EAL70459">
    <property type="protein sequence ID" value="EAL70459"/>
    <property type="gene ID" value="DDB_G0274051"/>
</dbReference>
<dbReference type="EnsemblProtists" id="EAL71075">
    <property type="protein sequence ID" value="EAL71075"/>
    <property type="gene ID" value="DDB_G0272875"/>
</dbReference>
<dbReference type="GeneID" id="8618706"/>
<dbReference type="GeneID" id="8619270"/>
<dbReference type="KEGG" id="ddi:DDB_G0272875"/>
<dbReference type="KEGG" id="ddi:DDB_G0274051"/>
<dbReference type="dictyBase" id="DDB_G0272875">
    <property type="gene designation" value="cpnB-1"/>
</dbReference>
<dbReference type="dictyBase" id="DDB_G0274051">
    <property type="gene designation" value="cpnB-2"/>
</dbReference>
<dbReference type="VEuPathDB" id="AmoebaDB:DDB_G0274051"/>
<dbReference type="eggNOG" id="KOG1327">
    <property type="taxonomic scope" value="Eukaryota"/>
</dbReference>
<dbReference type="InParanoid" id="Q86K21"/>
<dbReference type="PhylomeDB" id="Q86K21"/>
<dbReference type="Reactome" id="R-DDI-1483206">
    <property type="pathway name" value="Glycerophospholipid biosynthesis"/>
</dbReference>
<dbReference type="Reactome" id="R-DDI-6798695">
    <property type="pathway name" value="Neutrophil degranulation"/>
</dbReference>
<dbReference type="PRO" id="PR:Q86K21"/>
<dbReference type="Proteomes" id="UP000002195">
    <property type="component" value="Chromosome 2"/>
</dbReference>
<dbReference type="GO" id="GO:0005829">
    <property type="term" value="C:cytosol"/>
    <property type="evidence" value="ECO:0000314"/>
    <property type="project" value="dictyBase"/>
</dbReference>
<dbReference type="GO" id="GO:0005634">
    <property type="term" value="C:nucleus"/>
    <property type="evidence" value="ECO:0000314"/>
    <property type="project" value="dictyBase"/>
</dbReference>
<dbReference type="GO" id="GO:0005886">
    <property type="term" value="C:plasma membrane"/>
    <property type="evidence" value="ECO:0000314"/>
    <property type="project" value="dictyBase"/>
</dbReference>
<dbReference type="GO" id="GO:0005544">
    <property type="term" value="F:calcium-dependent phospholipid binding"/>
    <property type="evidence" value="ECO:0000318"/>
    <property type="project" value="GO_Central"/>
</dbReference>
<dbReference type="GO" id="GO:0046872">
    <property type="term" value="F:metal ion binding"/>
    <property type="evidence" value="ECO:0007669"/>
    <property type="project" value="UniProtKB-KW"/>
</dbReference>
<dbReference type="GO" id="GO:0071277">
    <property type="term" value="P:cellular response to calcium ion"/>
    <property type="evidence" value="ECO:0000314"/>
    <property type="project" value="dictyBase"/>
</dbReference>
<dbReference type="CDD" id="cd04048">
    <property type="entry name" value="C2A_Copine"/>
    <property type="match status" value="1"/>
</dbReference>
<dbReference type="CDD" id="cd04047">
    <property type="entry name" value="C2B_Copine"/>
    <property type="match status" value="1"/>
</dbReference>
<dbReference type="CDD" id="cd01459">
    <property type="entry name" value="vWA_copine_like"/>
    <property type="match status" value="1"/>
</dbReference>
<dbReference type="FunFam" id="2.60.40.150:FF:000219">
    <property type="entry name" value="Copine-E"/>
    <property type="match status" value="1"/>
</dbReference>
<dbReference type="FunFam" id="2.60.40.150:FF:000307">
    <property type="entry name" value="Copine-E"/>
    <property type="match status" value="1"/>
</dbReference>
<dbReference type="Gene3D" id="2.60.40.150">
    <property type="entry name" value="C2 domain"/>
    <property type="match status" value="2"/>
</dbReference>
<dbReference type="Gene3D" id="3.40.50.410">
    <property type="entry name" value="von Willebrand factor, type A domain"/>
    <property type="match status" value="1"/>
</dbReference>
<dbReference type="InterPro" id="IPR000008">
    <property type="entry name" value="C2_dom"/>
</dbReference>
<dbReference type="InterPro" id="IPR035892">
    <property type="entry name" value="C2_domain_sf"/>
</dbReference>
<dbReference type="InterPro" id="IPR037768">
    <property type="entry name" value="C2B_Copine"/>
</dbReference>
<dbReference type="InterPro" id="IPR045052">
    <property type="entry name" value="Copine"/>
</dbReference>
<dbReference type="InterPro" id="IPR010734">
    <property type="entry name" value="Copine_C"/>
</dbReference>
<dbReference type="InterPro" id="IPR002035">
    <property type="entry name" value="VWF_A"/>
</dbReference>
<dbReference type="InterPro" id="IPR036465">
    <property type="entry name" value="vWFA_dom_sf"/>
</dbReference>
<dbReference type="PANTHER" id="PTHR10857">
    <property type="entry name" value="COPINE"/>
    <property type="match status" value="1"/>
</dbReference>
<dbReference type="PANTHER" id="PTHR10857:SF30">
    <property type="entry name" value="COPINE-B-RELATED"/>
    <property type="match status" value="1"/>
</dbReference>
<dbReference type="Pfam" id="PF00168">
    <property type="entry name" value="C2"/>
    <property type="match status" value="2"/>
</dbReference>
<dbReference type="Pfam" id="PF07002">
    <property type="entry name" value="Copine"/>
    <property type="match status" value="1"/>
</dbReference>
<dbReference type="SMART" id="SM00239">
    <property type="entry name" value="C2"/>
    <property type="match status" value="2"/>
</dbReference>
<dbReference type="SMART" id="SM00327">
    <property type="entry name" value="VWA"/>
    <property type="match status" value="1"/>
</dbReference>
<dbReference type="SUPFAM" id="SSF49562">
    <property type="entry name" value="C2 domain (Calcium/lipid-binding domain, CaLB)"/>
    <property type="match status" value="2"/>
</dbReference>
<dbReference type="SUPFAM" id="SSF53300">
    <property type="entry name" value="vWA-like"/>
    <property type="match status" value="1"/>
</dbReference>
<dbReference type="PROSITE" id="PS50004">
    <property type="entry name" value="C2"/>
    <property type="match status" value="2"/>
</dbReference>
<dbReference type="PROSITE" id="PS50234">
    <property type="entry name" value="VWFA"/>
    <property type="match status" value="1"/>
</dbReference>
<proteinExistence type="evidence at transcript level"/>
<evidence type="ECO:0000255" key="1">
    <source>
        <dbReference type="PROSITE-ProRule" id="PRU00041"/>
    </source>
</evidence>
<evidence type="ECO:0000255" key="2">
    <source>
        <dbReference type="PROSITE-ProRule" id="PRU00219"/>
    </source>
</evidence>
<evidence type="ECO:0000269" key="3">
    <source>
    </source>
</evidence>
<evidence type="ECO:0000305" key="4"/>
<accession>Q86K21</accession>
<accession>Q556H8</accession>